<keyword id="KW-0007">Acetylation</keyword>
<keyword id="KW-0903">Direct protein sequencing</keyword>
<keyword id="KW-0349">Heme</keyword>
<keyword id="KW-0408">Iron</keyword>
<keyword id="KW-0479">Metal-binding</keyword>
<keyword id="KW-0561">Oxygen transport</keyword>
<keyword id="KW-0813">Transport</keyword>
<gene>
    <name type="primary">hba</name>
</gene>
<dbReference type="SMR" id="P0C238"/>
<dbReference type="iPTMnet" id="P0C238"/>
<dbReference type="GO" id="GO:0072562">
    <property type="term" value="C:blood microparticle"/>
    <property type="evidence" value="ECO:0007669"/>
    <property type="project" value="TreeGrafter"/>
</dbReference>
<dbReference type="GO" id="GO:0031838">
    <property type="term" value="C:haptoglobin-hemoglobin complex"/>
    <property type="evidence" value="ECO:0007669"/>
    <property type="project" value="TreeGrafter"/>
</dbReference>
<dbReference type="GO" id="GO:0005833">
    <property type="term" value="C:hemoglobin complex"/>
    <property type="evidence" value="ECO:0007669"/>
    <property type="project" value="InterPro"/>
</dbReference>
<dbReference type="GO" id="GO:0031720">
    <property type="term" value="F:haptoglobin binding"/>
    <property type="evidence" value="ECO:0007669"/>
    <property type="project" value="TreeGrafter"/>
</dbReference>
<dbReference type="GO" id="GO:0020037">
    <property type="term" value="F:heme binding"/>
    <property type="evidence" value="ECO:0007669"/>
    <property type="project" value="InterPro"/>
</dbReference>
<dbReference type="GO" id="GO:0005506">
    <property type="term" value="F:iron ion binding"/>
    <property type="evidence" value="ECO:0007669"/>
    <property type="project" value="InterPro"/>
</dbReference>
<dbReference type="GO" id="GO:0043177">
    <property type="term" value="F:organic acid binding"/>
    <property type="evidence" value="ECO:0007669"/>
    <property type="project" value="TreeGrafter"/>
</dbReference>
<dbReference type="GO" id="GO:0019825">
    <property type="term" value="F:oxygen binding"/>
    <property type="evidence" value="ECO:0007669"/>
    <property type="project" value="InterPro"/>
</dbReference>
<dbReference type="GO" id="GO:0005344">
    <property type="term" value="F:oxygen carrier activity"/>
    <property type="evidence" value="ECO:0007669"/>
    <property type="project" value="UniProtKB-KW"/>
</dbReference>
<dbReference type="GO" id="GO:0004601">
    <property type="term" value="F:peroxidase activity"/>
    <property type="evidence" value="ECO:0007669"/>
    <property type="project" value="TreeGrafter"/>
</dbReference>
<dbReference type="GO" id="GO:0042744">
    <property type="term" value="P:hydrogen peroxide catabolic process"/>
    <property type="evidence" value="ECO:0007669"/>
    <property type="project" value="TreeGrafter"/>
</dbReference>
<dbReference type="CDD" id="cd08927">
    <property type="entry name" value="Hb-alpha-like"/>
    <property type="match status" value="1"/>
</dbReference>
<dbReference type="FunFam" id="1.10.490.10:FF:000002">
    <property type="entry name" value="Hemoglobin subunit alpha"/>
    <property type="match status" value="1"/>
</dbReference>
<dbReference type="Gene3D" id="1.10.490.10">
    <property type="entry name" value="Globins"/>
    <property type="match status" value="1"/>
</dbReference>
<dbReference type="InterPro" id="IPR000971">
    <property type="entry name" value="Globin"/>
</dbReference>
<dbReference type="InterPro" id="IPR009050">
    <property type="entry name" value="Globin-like_sf"/>
</dbReference>
<dbReference type="InterPro" id="IPR012292">
    <property type="entry name" value="Globin/Proto"/>
</dbReference>
<dbReference type="InterPro" id="IPR002338">
    <property type="entry name" value="Hemoglobin_a-typ"/>
</dbReference>
<dbReference type="InterPro" id="IPR050056">
    <property type="entry name" value="Hemoglobin_oxygen_transport"/>
</dbReference>
<dbReference type="InterPro" id="IPR002339">
    <property type="entry name" value="Hemoglobin_pi"/>
</dbReference>
<dbReference type="PANTHER" id="PTHR11442">
    <property type="entry name" value="HEMOGLOBIN FAMILY MEMBER"/>
    <property type="match status" value="1"/>
</dbReference>
<dbReference type="PANTHER" id="PTHR11442:SF41">
    <property type="entry name" value="HEMOGLOBIN SUBUNIT ZETA"/>
    <property type="match status" value="1"/>
</dbReference>
<dbReference type="Pfam" id="PF00042">
    <property type="entry name" value="Globin"/>
    <property type="match status" value="1"/>
</dbReference>
<dbReference type="PRINTS" id="PR00612">
    <property type="entry name" value="ALPHAHAEM"/>
</dbReference>
<dbReference type="PRINTS" id="PR00815">
    <property type="entry name" value="PIHAEM"/>
</dbReference>
<dbReference type="SUPFAM" id="SSF46458">
    <property type="entry name" value="Globin-like"/>
    <property type="match status" value="1"/>
</dbReference>
<dbReference type="PROSITE" id="PS01033">
    <property type="entry name" value="GLOBIN"/>
    <property type="match status" value="1"/>
</dbReference>
<sequence length="143" mass="15695">MSLSDKDKSAVKALWSKINKSADVIGNDAVSRMIVVYPQTKTYFAHWPDLTPGSTHIKAHGKKVMGGIALAVSKIDDLKAGLSNLSEQHAFKLRVDPANFKILNHCIMVVISSMFPKDFTPEAHVSLDKFLSAVALALAEKYR</sequence>
<proteinExistence type="evidence at protein level"/>
<comment type="function">
    <text>Involved in oxygen transport from gills to the various peripheral tissues.</text>
</comment>
<comment type="subunit">
    <text>Heterotetramer of two alpha chains and two beta chains.</text>
</comment>
<comment type="tissue specificity">
    <text>Red blood cells.</text>
</comment>
<comment type="similarity">
    <text evidence="2">Belongs to the globin family.</text>
</comment>
<organism>
    <name type="scientific">Pogonophryne scotti</name>
    <name type="common">Saddleback plunderfish</name>
    <name type="synonym">Antarctic fish</name>
    <dbReference type="NCBI Taxonomy" id="36210"/>
    <lineage>
        <taxon>Eukaryota</taxon>
        <taxon>Metazoa</taxon>
        <taxon>Chordata</taxon>
        <taxon>Craniata</taxon>
        <taxon>Vertebrata</taxon>
        <taxon>Euteleostomi</taxon>
        <taxon>Actinopterygii</taxon>
        <taxon>Neopterygii</taxon>
        <taxon>Teleostei</taxon>
        <taxon>Neoteleostei</taxon>
        <taxon>Acanthomorphata</taxon>
        <taxon>Eupercaria</taxon>
        <taxon>Perciformes</taxon>
        <taxon>Notothenioidei</taxon>
        <taxon>Pogonophryne</taxon>
    </lineage>
</organism>
<evidence type="ECO:0000250" key="1"/>
<evidence type="ECO:0000255" key="2">
    <source>
        <dbReference type="PROSITE-ProRule" id="PRU00238"/>
    </source>
</evidence>
<evidence type="ECO:0000269" key="3">
    <source>
    </source>
</evidence>
<feature type="initiator methionine" description="Removed" evidence="1">
    <location>
        <position position="1"/>
    </location>
</feature>
<feature type="chain" id="PRO_0000260297" description="Hemoglobin subunit alpha">
    <location>
        <begin position="2"/>
        <end position="143"/>
    </location>
</feature>
<feature type="domain" description="Globin" evidence="2">
    <location>
        <begin position="2"/>
        <end position="143"/>
    </location>
</feature>
<feature type="binding site" evidence="2">
    <location>
        <position position="60"/>
    </location>
    <ligand>
        <name>O2</name>
        <dbReference type="ChEBI" id="CHEBI:15379"/>
    </ligand>
</feature>
<feature type="binding site" description="proximal binding residue" evidence="2">
    <location>
        <position position="89"/>
    </location>
    <ligand>
        <name>heme b</name>
        <dbReference type="ChEBI" id="CHEBI:60344"/>
    </ligand>
    <ligandPart>
        <name>Fe</name>
        <dbReference type="ChEBI" id="CHEBI:18248"/>
    </ligandPart>
</feature>
<feature type="modified residue" description="N-acetylserine" evidence="3">
    <location>
        <position position="2"/>
    </location>
</feature>
<name>HBA_POGSC</name>
<reference key="1">
    <citation type="journal article" date="1998" name="J. Biol. Chem.">
        <title>The hemoglobins of the antarctic fishes Atedidraco orianae and Pogonophryne scotti. Amino acid sequence, lack of cooperativity, and ligand binding properties.</title>
        <authorList>
            <person name="Tamburrini M."/>
            <person name="Romano M."/>
            <person name="Carratore V."/>
            <person name="Kunzmann A."/>
            <person name="Coletta M."/>
            <person name="di Prisco G."/>
        </authorList>
    </citation>
    <scope>PROTEIN SEQUENCE OF 2-143</scope>
    <scope>ACETYLATION AT SER-2</scope>
</reference>
<protein>
    <recommendedName>
        <fullName>Hemoglobin subunit alpha</fullName>
    </recommendedName>
    <alternativeName>
        <fullName>Alpha-globin</fullName>
    </alternativeName>
    <alternativeName>
        <fullName>Hemoglobin alpha chain</fullName>
    </alternativeName>
</protein>
<accession>P0C238</accession>